<keyword id="KW-0004">4Fe-4S</keyword>
<keyword id="KW-0963">Cytoplasm</keyword>
<keyword id="KW-0408">Iron</keyword>
<keyword id="KW-0411">Iron-sulfur</keyword>
<keyword id="KW-0479">Metal-binding</keyword>
<keyword id="KW-1185">Reference proteome</keyword>
<keyword id="KW-0949">S-adenosyl-L-methionine</keyword>
<keyword id="KW-0808">Transferase</keyword>
<keyword id="KW-0819">tRNA processing</keyword>
<feature type="chain" id="PRO_0000374552" description="tRNA-2-methylthio-N(6)-dimethylallyladenosine synthase">
    <location>
        <begin position="1"/>
        <end position="474"/>
    </location>
</feature>
<feature type="domain" description="MTTase N-terminal" evidence="1">
    <location>
        <begin position="3"/>
        <end position="120"/>
    </location>
</feature>
<feature type="domain" description="Radical SAM core" evidence="2">
    <location>
        <begin position="143"/>
        <end position="375"/>
    </location>
</feature>
<feature type="domain" description="TRAM" evidence="1">
    <location>
        <begin position="378"/>
        <end position="441"/>
    </location>
</feature>
<feature type="binding site" evidence="1">
    <location>
        <position position="12"/>
    </location>
    <ligand>
        <name>[4Fe-4S] cluster</name>
        <dbReference type="ChEBI" id="CHEBI:49883"/>
        <label>1</label>
    </ligand>
</feature>
<feature type="binding site" evidence="1">
    <location>
        <position position="49"/>
    </location>
    <ligand>
        <name>[4Fe-4S] cluster</name>
        <dbReference type="ChEBI" id="CHEBI:49883"/>
        <label>1</label>
    </ligand>
</feature>
<feature type="binding site" evidence="1">
    <location>
        <position position="83"/>
    </location>
    <ligand>
        <name>[4Fe-4S] cluster</name>
        <dbReference type="ChEBI" id="CHEBI:49883"/>
        <label>1</label>
    </ligand>
</feature>
<feature type="binding site" evidence="1">
    <location>
        <position position="157"/>
    </location>
    <ligand>
        <name>[4Fe-4S] cluster</name>
        <dbReference type="ChEBI" id="CHEBI:49883"/>
        <label>2</label>
        <note>4Fe-4S-S-AdoMet</note>
    </ligand>
</feature>
<feature type="binding site" evidence="1">
    <location>
        <position position="161"/>
    </location>
    <ligand>
        <name>[4Fe-4S] cluster</name>
        <dbReference type="ChEBI" id="CHEBI:49883"/>
        <label>2</label>
        <note>4Fe-4S-S-AdoMet</note>
    </ligand>
</feature>
<feature type="binding site" evidence="1">
    <location>
        <position position="164"/>
    </location>
    <ligand>
        <name>[4Fe-4S] cluster</name>
        <dbReference type="ChEBI" id="CHEBI:49883"/>
        <label>2</label>
        <note>4Fe-4S-S-AdoMet</note>
    </ligand>
</feature>
<name>MIAB_SHIDS</name>
<gene>
    <name evidence="1" type="primary">miaB</name>
    <name type="ordered locus">SDY_0597</name>
</gene>
<reference key="1">
    <citation type="journal article" date="2005" name="Nucleic Acids Res.">
        <title>Genome dynamics and diversity of Shigella species, the etiologic agents of bacillary dysentery.</title>
        <authorList>
            <person name="Yang F."/>
            <person name="Yang J."/>
            <person name="Zhang X."/>
            <person name="Chen L."/>
            <person name="Jiang Y."/>
            <person name="Yan Y."/>
            <person name="Tang X."/>
            <person name="Wang J."/>
            <person name="Xiong Z."/>
            <person name="Dong J."/>
            <person name="Xue Y."/>
            <person name="Zhu Y."/>
            <person name="Xu X."/>
            <person name="Sun L."/>
            <person name="Chen S."/>
            <person name="Nie H."/>
            <person name="Peng J."/>
            <person name="Xu J."/>
            <person name="Wang Y."/>
            <person name="Yuan Z."/>
            <person name="Wen Y."/>
            <person name="Yao Z."/>
            <person name="Shen Y."/>
            <person name="Qiang B."/>
            <person name="Hou Y."/>
            <person name="Yu J."/>
            <person name="Jin Q."/>
        </authorList>
    </citation>
    <scope>NUCLEOTIDE SEQUENCE [LARGE SCALE GENOMIC DNA]</scope>
    <source>
        <strain>Sd197</strain>
    </source>
</reference>
<accession>Q32IR1</accession>
<proteinExistence type="inferred from homology"/>
<sequence length="474" mass="53663">MTKKLHIKTWGCQMNEYDSSKMADLLDATHGYQLTDVAEEADVLLLNTCSIREKAQEKVFHQLGRWKLLKEKNPDLIIGVGGCVASQEGEHIRQRAHYVDIIFGPQTLHRLPEMINSVRGDRSPVVDISFPEIEKFDRLPEPRAEGPTAFVSIMEGCNKYCTYCVVPYTRGEEVSRPSDDILFEIAQLAAQGVREVNLLGQNVNAWRGENYDGTTGSFADLLRLVAAIDGIDRIRFTTSHPIEFTDDIIEVYRDTPELVSFLHLPVQSGSDRILNLMGRTHTALEYKAIIRKLRAARPDIQISSDFIVGFPGETTEDFEKTMKLIADVNFDMSYSFIFSARPGTPAADMVDDVPEEEKKQRLYILQERINQQAMAWSRRMLGTTQRILVEGTSRKSIMELSGRTENNRVVNFEGTPDMIGKFVDVEITDVYPNSLRGKVVRTEDEMGLRVAETPESVIARTRKENDLGVGYYQP</sequence>
<evidence type="ECO:0000255" key="1">
    <source>
        <dbReference type="HAMAP-Rule" id="MF_01864"/>
    </source>
</evidence>
<evidence type="ECO:0000255" key="2">
    <source>
        <dbReference type="PROSITE-ProRule" id="PRU01266"/>
    </source>
</evidence>
<protein>
    <recommendedName>
        <fullName evidence="1">tRNA-2-methylthio-N(6)-dimethylallyladenosine synthase</fullName>
        <ecNumber evidence="1">2.8.4.3</ecNumber>
    </recommendedName>
    <alternativeName>
        <fullName evidence="1">(Dimethylallyl)adenosine tRNA methylthiotransferase MiaB</fullName>
    </alternativeName>
    <alternativeName>
        <fullName evidence="1">tRNA-i(6)A37 methylthiotransferase</fullName>
    </alternativeName>
</protein>
<organism>
    <name type="scientific">Shigella dysenteriae serotype 1 (strain Sd197)</name>
    <dbReference type="NCBI Taxonomy" id="300267"/>
    <lineage>
        <taxon>Bacteria</taxon>
        <taxon>Pseudomonadati</taxon>
        <taxon>Pseudomonadota</taxon>
        <taxon>Gammaproteobacteria</taxon>
        <taxon>Enterobacterales</taxon>
        <taxon>Enterobacteriaceae</taxon>
        <taxon>Shigella</taxon>
    </lineage>
</organism>
<dbReference type="EC" id="2.8.4.3" evidence="1"/>
<dbReference type="EMBL" id="CP000034">
    <property type="protein sequence ID" value="ABB60796.1"/>
    <property type="molecule type" value="Genomic_DNA"/>
</dbReference>
<dbReference type="RefSeq" id="WP_000162740.1">
    <property type="nucleotide sequence ID" value="NC_007606.1"/>
</dbReference>
<dbReference type="RefSeq" id="YP_402285.1">
    <property type="nucleotide sequence ID" value="NC_007606.1"/>
</dbReference>
<dbReference type="SMR" id="Q32IR1"/>
<dbReference type="STRING" id="300267.SDY_0597"/>
<dbReference type="EnsemblBacteria" id="ABB60796">
    <property type="protein sequence ID" value="ABB60796"/>
    <property type="gene ID" value="SDY_0597"/>
</dbReference>
<dbReference type="GeneID" id="86863171"/>
<dbReference type="KEGG" id="sdy:SDY_0597"/>
<dbReference type="PATRIC" id="fig|300267.13.peg.701"/>
<dbReference type="HOGENOM" id="CLU_018697_2_0_6"/>
<dbReference type="Proteomes" id="UP000002716">
    <property type="component" value="Chromosome"/>
</dbReference>
<dbReference type="GO" id="GO:0005829">
    <property type="term" value="C:cytosol"/>
    <property type="evidence" value="ECO:0007669"/>
    <property type="project" value="TreeGrafter"/>
</dbReference>
<dbReference type="GO" id="GO:0051539">
    <property type="term" value="F:4 iron, 4 sulfur cluster binding"/>
    <property type="evidence" value="ECO:0007669"/>
    <property type="project" value="UniProtKB-UniRule"/>
</dbReference>
<dbReference type="GO" id="GO:0046872">
    <property type="term" value="F:metal ion binding"/>
    <property type="evidence" value="ECO:0007669"/>
    <property type="project" value="UniProtKB-KW"/>
</dbReference>
<dbReference type="GO" id="GO:0035597">
    <property type="term" value="F:N6-isopentenyladenosine methylthiotransferase activity"/>
    <property type="evidence" value="ECO:0007669"/>
    <property type="project" value="TreeGrafter"/>
</dbReference>
<dbReference type="CDD" id="cd01335">
    <property type="entry name" value="Radical_SAM"/>
    <property type="match status" value="1"/>
</dbReference>
<dbReference type="FunFam" id="3.40.50.12160:FF:000001">
    <property type="entry name" value="tRNA-2-methylthio-N(6)-dimethylallyladenosine synthase"/>
    <property type="match status" value="1"/>
</dbReference>
<dbReference type="FunFam" id="3.80.30.20:FF:000001">
    <property type="entry name" value="tRNA-2-methylthio-N(6)-dimethylallyladenosine synthase 2"/>
    <property type="match status" value="1"/>
</dbReference>
<dbReference type="Gene3D" id="3.40.50.12160">
    <property type="entry name" value="Methylthiotransferase, N-terminal domain"/>
    <property type="match status" value="1"/>
</dbReference>
<dbReference type="Gene3D" id="3.80.30.20">
    <property type="entry name" value="tm_1862 like domain"/>
    <property type="match status" value="1"/>
</dbReference>
<dbReference type="HAMAP" id="MF_01864">
    <property type="entry name" value="tRNA_metthiotr_MiaB"/>
    <property type="match status" value="1"/>
</dbReference>
<dbReference type="InterPro" id="IPR006638">
    <property type="entry name" value="Elp3/MiaA/NifB-like_rSAM"/>
</dbReference>
<dbReference type="InterPro" id="IPR005839">
    <property type="entry name" value="Methylthiotransferase"/>
</dbReference>
<dbReference type="InterPro" id="IPR020612">
    <property type="entry name" value="Methylthiotransferase_CS"/>
</dbReference>
<dbReference type="InterPro" id="IPR013848">
    <property type="entry name" value="Methylthiotransferase_N"/>
</dbReference>
<dbReference type="InterPro" id="IPR038135">
    <property type="entry name" value="Methylthiotransferase_N_sf"/>
</dbReference>
<dbReference type="InterPro" id="IPR006463">
    <property type="entry name" value="MiaB_methiolase"/>
</dbReference>
<dbReference type="InterPro" id="IPR007197">
    <property type="entry name" value="rSAM"/>
</dbReference>
<dbReference type="InterPro" id="IPR023404">
    <property type="entry name" value="rSAM_horseshoe"/>
</dbReference>
<dbReference type="InterPro" id="IPR002792">
    <property type="entry name" value="TRAM_dom"/>
</dbReference>
<dbReference type="NCBIfam" id="TIGR01574">
    <property type="entry name" value="miaB-methiolase"/>
    <property type="match status" value="1"/>
</dbReference>
<dbReference type="NCBIfam" id="TIGR00089">
    <property type="entry name" value="MiaB/RimO family radical SAM methylthiotransferase"/>
    <property type="match status" value="1"/>
</dbReference>
<dbReference type="PANTHER" id="PTHR43020">
    <property type="entry name" value="CDK5 REGULATORY SUBUNIT-ASSOCIATED PROTEIN 1"/>
    <property type="match status" value="1"/>
</dbReference>
<dbReference type="PANTHER" id="PTHR43020:SF2">
    <property type="entry name" value="MITOCHONDRIAL TRNA METHYLTHIOTRANSFERASE CDK5RAP1"/>
    <property type="match status" value="1"/>
</dbReference>
<dbReference type="Pfam" id="PF04055">
    <property type="entry name" value="Radical_SAM"/>
    <property type="match status" value="1"/>
</dbReference>
<dbReference type="Pfam" id="PF01938">
    <property type="entry name" value="TRAM"/>
    <property type="match status" value="1"/>
</dbReference>
<dbReference type="Pfam" id="PF00919">
    <property type="entry name" value="UPF0004"/>
    <property type="match status" value="1"/>
</dbReference>
<dbReference type="SFLD" id="SFLDF00273">
    <property type="entry name" value="(dimethylallyl)adenosine_tRNA"/>
    <property type="match status" value="1"/>
</dbReference>
<dbReference type="SFLD" id="SFLDG01082">
    <property type="entry name" value="B12-binding_domain_containing"/>
    <property type="match status" value="1"/>
</dbReference>
<dbReference type="SFLD" id="SFLDS00029">
    <property type="entry name" value="Radical_SAM"/>
    <property type="match status" value="1"/>
</dbReference>
<dbReference type="SMART" id="SM00729">
    <property type="entry name" value="Elp3"/>
    <property type="match status" value="1"/>
</dbReference>
<dbReference type="SUPFAM" id="SSF102114">
    <property type="entry name" value="Radical SAM enzymes"/>
    <property type="match status" value="1"/>
</dbReference>
<dbReference type="PROSITE" id="PS51449">
    <property type="entry name" value="MTTASE_N"/>
    <property type="match status" value="1"/>
</dbReference>
<dbReference type="PROSITE" id="PS01278">
    <property type="entry name" value="MTTASE_RADICAL"/>
    <property type="match status" value="1"/>
</dbReference>
<dbReference type="PROSITE" id="PS51918">
    <property type="entry name" value="RADICAL_SAM"/>
    <property type="match status" value="1"/>
</dbReference>
<dbReference type="PROSITE" id="PS50926">
    <property type="entry name" value="TRAM"/>
    <property type="match status" value="1"/>
</dbReference>
<comment type="function">
    <text evidence="1">Catalyzes the methylthiolation of N6-(dimethylallyl)adenosine (i(6)A), leading to the formation of 2-methylthio-N6-(dimethylallyl)adenosine (ms(2)i(6)A) at position 37 in tRNAs that read codons beginning with uridine.</text>
</comment>
<comment type="catalytic activity">
    <reaction evidence="1">
        <text>N(6)-dimethylallyladenosine(37) in tRNA + (sulfur carrier)-SH + AH2 + 2 S-adenosyl-L-methionine = 2-methylsulfanyl-N(6)-dimethylallyladenosine(37) in tRNA + (sulfur carrier)-H + 5'-deoxyadenosine + L-methionine + A + S-adenosyl-L-homocysteine + 2 H(+)</text>
        <dbReference type="Rhea" id="RHEA:37067"/>
        <dbReference type="Rhea" id="RHEA-COMP:10375"/>
        <dbReference type="Rhea" id="RHEA-COMP:10376"/>
        <dbReference type="Rhea" id="RHEA-COMP:14737"/>
        <dbReference type="Rhea" id="RHEA-COMP:14739"/>
        <dbReference type="ChEBI" id="CHEBI:13193"/>
        <dbReference type="ChEBI" id="CHEBI:15378"/>
        <dbReference type="ChEBI" id="CHEBI:17319"/>
        <dbReference type="ChEBI" id="CHEBI:17499"/>
        <dbReference type="ChEBI" id="CHEBI:29917"/>
        <dbReference type="ChEBI" id="CHEBI:57844"/>
        <dbReference type="ChEBI" id="CHEBI:57856"/>
        <dbReference type="ChEBI" id="CHEBI:59789"/>
        <dbReference type="ChEBI" id="CHEBI:64428"/>
        <dbReference type="ChEBI" id="CHEBI:74415"/>
        <dbReference type="ChEBI" id="CHEBI:74417"/>
        <dbReference type="EC" id="2.8.4.3"/>
    </reaction>
</comment>
<comment type="cofactor">
    <cofactor evidence="1">
        <name>[4Fe-4S] cluster</name>
        <dbReference type="ChEBI" id="CHEBI:49883"/>
    </cofactor>
    <text evidence="1">Binds 2 [4Fe-4S] clusters. One cluster is coordinated with 3 cysteines and an exchangeable S-adenosyl-L-methionine.</text>
</comment>
<comment type="subunit">
    <text evidence="1">Monomer.</text>
</comment>
<comment type="subcellular location">
    <subcellularLocation>
        <location evidence="1">Cytoplasm</location>
    </subcellularLocation>
</comment>
<comment type="similarity">
    <text evidence="1">Belongs to the methylthiotransferase family. MiaB subfamily.</text>
</comment>